<evidence type="ECO:0000255" key="1">
    <source>
        <dbReference type="HAMAP-Rule" id="MF_01394"/>
    </source>
</evidence>
<evidence type="ECO:0000256" key="2">
    <source>
        <dbReference type="SAM" id="MobiDB-lite"/>
    </source>
</evidence>
<reference key="1">
    <citation type="journal article" date="2008" name="PLoS ONE">
        <title>Comparative analysis of Acinetobacters: three genomes for three lifestyles.</title>
        <authorList>
            <person name="Vallenet D."/>
            <person name="Nordmann P."/>
            <person name="Barbe V."/>
            <person name="Poirel L."/>
            <person name="Mangenot S."/>
            <person name="Bataille E."/>
            <person name="Dossat C."/>
            <person name="Gas S."/>
            <person name="Kreimeyer A."/>
            <person name="Lenoble P."/>
            <person name="Oztas S."/>
            <person name="Poulain J."/>
            <person name="Segurens B."/>
            <person name="Robert C."/>
            <person name="Abergel C."/>
            <person name="Claverie J.-M."/>
            <person name="Raoult D."/>
            <person name="Medigue C."/>
            <person name="Weissenbach J."/>
            <person name="Cruveiller S."/>
        </authorList>
    </citation>
    <scope>NUCLEOTIDE SEQUENCE [LARGE SCALE GENOMIC DNA]</scope>
    <source>
        <strain>SDF</strain>
    </source>
</reference>
<keyword id="KW-0997">Cell inner membrane</keyword>
<keyword id="KW-1003">Cell membrane</keyword>
<keyword id="KW-0472">Membrane</keyword>
<keyword id="KW-0520">NAD</keyword>
<keyword id="KW-0874">Quinone</keyword>
<keyword id="KW-1278">Translocase</keyword>
<keyword id="KW-0812">Transmembrane</keyword>
<keyword id="KW-1133">Transmembrane helix</keyword>
<keyword id="KW-0813">Transport</keyword>
<keyword id="KW-0830">Ubiquinone</keyword>
<feature type="chain" id="PRO_0000362615" description="NADH-quinone oxidoreductase subunit A">
    <location>
        <begin position="1"/>
        <end position="183"/>
    </location>
</feature>
<feature type="transmembrane region" description="Helical" evidence="1">
    <location>
        <begin position="11"/>
        <end position="31"/>
    </location>
</feature>
<feature type="transmembrane region" description="Helical" evidence="1">
    <location>
        <begin position="63"/>
        <end position="83"/>
    </location>
</feature>
<feature type="transmembrane region" description="Helical" evidence="1">
    <location>
        <begin position="98"/>
        <end position="118"/>
    </location>
</feature>
<feature type="region of interest" description="Disordered" evidence="2">
    <location>
        <begin position="159"/>
        <end position="183"/>
    </location>
</feature>
<proteinExistence type="inferred from homology"/>
<sequence length="183" mass="19980">MSAITPYDWAIIAFVIGVTFLCVFMLTVPLLLGGKSWGRAKQEQFESGVVSAGGARIRLSAKFYLVAIFFVVFDLEALYLYAWSTSVREVGWLGYTTVVIFVVDLLIALVYAFSVGALSWAPADRRKLAGEKIKVGSPTMNIAEITRFNSIEELVTDPTGQIPAQSSGRVKSKTTPALSSEKE</sequence>
<name>NUOA_ACIBS</name>
<accession>B0VU56</accession>
<organism>
    <name type="scientific">Acinetobacter baumannii (strain SDF)</name>
    <dbReference type="NCBI Taxonomy" id="509170"/>
    <lineage>
        <taxon>Bacteria</taxon>
        <taxon>Pseudomonadati</taxon>
        <taxon>Pseudomonadota</taxon>
        <taxon>Gammaproteobacteria</taxon>
        <taxon>Moraxellales</taxon>
        <taxon>Moraxellaceae</taxon>
        <taxon>Acinetobacter</taxon>
        <taxon>Acinetobacter calcoaceticus/baumannii complex</taxon>
    </lineage>
</organism>
<comment type="function">
    <text evidence="1">NDH-1 shuttles electrons from NADH, via FMN and iron-sulfur (Fe-S) centers, to quinones in the respiratory chain. The immediate electron acceptor for the enzyme in this species is believed to be ubiquinone. Couples the redox reaction to proton translocation (for every two electrons transferred, four hydrogen ions are translocated across the cytoplasmic membrane), and thus conserves the redox energy in a proton gradient.</text>
</comment>
<comment type="catalytic activity">
    <reaction evidence="1">
        <text>a quinone + NADH + 5 H(+)(in) = a quinol + NAD(+) + 4 H(+)(out)</text>
        <dbReference type="Rhea" id="RHEA:57888"/>
        <dbReference type="ChEBI" id="CHEBI:15378"/>
        <dbReference type="ChEBI" id="CHEBI:24646"/>
        <dbReference type="ChEBI" id="CHEBI:57540"/>
        <dbReference type="ChEBI" id="CHEBI:57945"/>
        <dbReference type="ChEBI" id="CHEBI:132124"/>
    </reaction>
</comment>
<comment type="subunit">
    <text evidence="1">NDH-1 is composed of 14 different subunits. Subunits NuoA, H, J, K, L, M, N constitute the membrane sector of the complex.</text>
</comment>
<comment type="subcellular location">
    <subcellularLocation>
        <location evidence="1">Cell inner membrane</location>
        <topology evidence="1">Multi-pass membrane protein</topology>
    </subcellularLocation>
</comment>
<comment type="similarity">
    <text evidence="1">Belongs to the complex I subunit 3 family.</text>
</comment>
<gene>
    <name evidence="1" type="primary">nuoA</name>
    <name type="ordered locus">ABSDF2714</name>
</gene>
<dbReference type="EC" id="7.1.1.-" evidence="1"/>
<dbReference type="EMBL" id="CU468230">
    <property type="protein sequence ID" value="CAP02019.1"/>
    <property type="molecule type" value="Genomic_DNA"/>
</dbReference>
<dbReference type="SMR" id="B0VU56"/>
<dbReference type="KEGG" id="abm:ABSDF2714"/>
<dbReference type="HOGENOM" id="CLU_1486001_0_0_6"/>
<dbReference type="Proteomes" id="UP000001741">
    <property type="component" value="Chromosome"/>
</dbReference>
<dbReference type="GO" id="GO:0030964">
    <property type="term" value="C:NADH dehydrogenase complex"/>
    <property type="evidence" value="ECO:0007669"/>
    <property type="project" value="TreeGrafter"/>
</dbReference>
<dbReference type="GO" id="GO:0005886">
    <property type="term" value="C:plasma membrane"/>
    <property type="evidence" value="ECO:0007669"/>
    <property type="project" value="UniProtKB-SubCell"/>
</dbReference>
<dbReference type="GO" id="GO:0008137">
    <property type="term" value="F:NADH dehydrogenase (ubiquinone) activity"/>
    <property type="evidence" value="ECO:0007669"/>
    <property type="project" value="InterPro"/>
</dbReference>
<dbReference type="GO" id="GO:0050136">
    <property type="term" value="F:NADH:ubiquinone reductase (non-electrogenic) activity"/>
    <property type="evidence" value="ECO:0007669"/>
    <property type="project" value="UniProtKB-UniRule"/>
</dbReference>
<dbReference type="GO" id="GO:0048038">
    <property type="term" value="F:quinone binding"/>
    <property type="evidence" value="ECO:0007669"/>
    <property type="project" value="UniProtKB-KW"/>
</dbReference>
<dbReference type="Gene3D" id="1.20.58.1610">
    <property type="entry name" value="NADH:ubiquinone/plastoquinone oxidoreductase, chain 3"/>
    <property type="match status" value="1"/>
</dbReference>
<dbReference type="HAMAP" id="MF_01394">
    <property type="entry name" value="NDH1_NuoA"/>
    <property type="match status" value="1"/>
</dbReference>
<dbReference type="InterPro" id="IPR023043">
    <property type="entry name" value="NAD(P)H_OxRDtase_bac/plastid"/>
</dbReference>
<dbReference type="InterPro" id="IPR000440">
    <property type="entry name" value="NADH_UbQ/plastoQ_OxRdtase_su3"/>
</dbReference>
<dbReference type="InterPro" id="IPR038430">
    <property type="entry name" value="NDAH_ubi_oxred_su3_sf"/>
</dbReference>
<dbReference type="PANTHER" id="PTHR11058:SF21">
    <property type="entry name" value="NADH-QUINONE OXIDOREDUCTASE SUBUNIT A"/>
    <property type="match status" value="1"/>
</dbReference>
<dbReference type="PANTHER" id="PTHR11058">
    <property type="entry name" value="NADH-UBIQUINONE OXIDOREDUCTASE CHAIN 3"/>
    <property type="match status" value="1"/>
</dbReference>
<dbReference type="Pfam" id="PF00507">
    <property type="entry name" value="Oxidored_q4"/>
    <property type="match status" value="1"/>
</dbReference>
<protein>
    <recommendedName>
        <fullName evidence="1">NADH-quinone oxidoreductase subunit A</fullName>
        <ecNumber evidence="1">7.1.1.-</ecNumber>
    </recommendedName>
    <alternativeName>
        <fullName evidence="1">NADH dehydrogenase I subunit A</fullName>
    </alternativeName>
    <alternativeName>
        <fullName evidence="1">NDH-1 subunit A</fullName>
    </alternativeName>
    <alternativeName>
        <fullName evidence="1">NUO1</fullName>
    </alternativeName>
</protein>